<name>IF1_BUCBP</name>
<proteinExistence type="inferred from homology"/>
<feature type="chain" id="PRO_0000095758" description="Translation initiation factor IF-1">
    <location>
        <begin position="1"/>
        <end position="72"/>
    </location>
</feature>
<feature type="domain" description="S1-like" evidence="1">
    <location>
        <begin position="1"/>
        <end position="72"/>
    </location>
</feature>
<accession>P59430</accession>
<evidence type="ECO:0000255" key="1">
    <source>
        <dbReference type="HAMAP-Rule" id="MF_00075"/>
    </source>
</evidence>
<dbReference type="EMBL" id="AE016826">
    <property type="protein sequence ID" value="AAO27017.1"/>
    <property type="molecule type" value="Genomic_DNA"/>
</dbReference>
<dbReference type="RefSeq" id="WP_011091418.1">
    <property type="nucleotide sequence ID" value="NC_004545.1"/>
</dbReference>
<dbReference type="SMR" id="P59430"/>
<dbReference type="STRING" id="224915.bbp_292"/>
<dbReference type="KEGG" id="bab:bbp_292"/>
<dbReference type="eggNOG" id="COG0361">
    <property type="taxonomic scope" value="Bacteria"/>
</dbReference>
<dbReference type="HOGENOM" id="CLU_151267_1_0_6"/>
<dbReference type="OrthoDB" id="9803250at2"/>
<dbReference type="Proteomes" id="UP000000601">
    <property type="component" value="Chromosome"/>
</dbReference>
<dbReference type="GO" id="GO:0005829">
    <property type="term" value="C:cytosol"/>
    <property type="evidence" value="ECO:0007669"/>
    <property type="project" value="TreeGrafter"/>
</dbReference>
<dbReference type="GO" id="GO:0043022">
    <property type="term" value="F:ribosome binding"/>
    <property type="evidence" value="ECO:0007669"/>
    <property type="project" value="UniProtKB-UniRule"/>
</dbReference>
<dbReference type="GO" id="GO:0019843">
    <property type="term" value="F:rRNA binding"/>
    <property type="evidence" value="ECO:0007669"/>
    <property type="project" value="UniProtKB-UniRule"/>
</dbReference>
<dbReference type="GO" id="GO:0003743">
    <property type="term" value="F:translation initiation factor activity"/>
    <property type="evidence" value="ECO:0007669"/>
    <property type="project" value="UniProtKB-UniRule"/>
</dbReference>
<dbReference type="CDD" id="cd04451">
    <property type="entry name" value="S1_IF1"/>
    <property type="match status" value="1"/>
</dbReference>
<dbReference type="FunFam" id="2.40.50.140:FF:000002">
    <property type="entry name" value="Translation initiation factor IF-1"/>
    <property type="match status" value="1"/>
</dbReference>
<dbReference type="Gene3D" id="2.40.50.140">
    <property type="entry name" value="Nucleic acid-binding proteins"/>
    <property type="match status" value="1"/>
</dbReference>
<dbReference type="HAMAP" id="MF_00075">
    <property type="entry name" value="IF_1"/>
    <property type="match status" value="1"/>
</dbReference>
<dbReference type="InterPro" id="IPR012340">
    <property type="entry name" value="NA-bd_OB-fold"/>
</dbReference>
<dbReference type="InterPro" id="IPR006196">
    <property type="entry name" value="RNA-binding_domain_S1_IF1"/>
</dbReference>
<dbReference type="InterPro" id="IPR003029">
    <property type="entry name" value="S1_domain"/>
</dbReference>
<dbReference type="InterPro" id="IPR004368">
    <property type="entry name" value="TIF_IF1"/>
</dbReference>
<dbReference type="NCBIfam" id="TIGR00008">
    <property type="entry name" value="infA"/>
    <property type="match status" value="1"/>
</dbReference>
<dbReference type="PANTHER" id="PTHR33370">
    <property type="entry name" value="TRANSLATION INITIATION FACTOR IF-1, CHLOROPLASTIC"/>
    <property type="match status" value="1"/>
</dbReference>
<dbReference type="PANTHER" id="PTHR33370:SF1">
    <property type="entry name" value="TRANSLATION INITIATION FACTOR IF-1, CHLOROPLASTIC"/>
    <property type="match status" value="1"/>
</dbReference>
<dbReference type="Pfam" id="PF01176">
    <property type="entry name" value="eIF-1a"/>
    <property type="match status" value="1"/>
</dbReference>
<dbReference type="SMART" id="SM00316">
    <property type="entry name" value="S1"/>
    <property type="match status" value="1"/>
</dbReference>
<dbReference type="SUPFAM" id="SSF50249">
    <property type="entry name" value="Nucleic acid-binding proteins"/>
    <property type="match status" value="1"/>
</dbReference>
<dbReference type="PROSITE" id="PS50832">
    <property type="entry name" value="S1_IF1_TYPE"/>
    <property type="match status" value="1"/>
</dbReference>
<reference key="1">
    <citation type="journal article" date="2003" name="Proc. Natl. Acad. Sci. U.S.A.">
        <title>Reductive genome evolution in Buchnera aphidicola.</title>
        <authorList>
            <person name="van Ham R.C.H.J."/>
            <person name="Kamerbeek J."/>
            <person name="Palacios C."/>
            <person name="Rausell C."/>
            <person name="Abascal F."/>
            <person name="Bastolla U."/>
            <person name="Fernandez J.M."/>
            <person name="Jimenez L."/>
            <person name="Postigo M."/>
            <person name="Silva F.J."/>
            <person name="Tamames J."/>
            <person name="Viguera E."/>
            <person name="Latorre A."/>
            <person name="Valencia A."/>
            <person name="Moran F."/>
            <person name="Moya A."/>
        </authorList>
    </citation>
    <scope>NUCLEOTIDE SEQUENCE [LARGE SCALE GENOMIC DNA]</scope>
    <source>
        <strain>Bp</strain>
    </source>
</reference>
<keyword id="KW-0963">Cytoplasm</keyword>
<keyword id="KW-0396">Initiation factor</keyword>
<keyword id="KW-0648">Protein biosynthesis</keyword>
<keyword id="KW-1185">Reference proteome</keyword>
<keyword id="KW-0694">RNA-binding</keyword>
<keyword id="KW-0699">rRNA-binding</keyword>
<organism>
    <name type="scientific">Buchnera aphidicola subsp. Baizongia pistaciae (strain Bp)</name>
    <dbReference type="NCBI Taxonomy" id="224915"/>
    <lineage>
        <taxon>Bacteria</taxon>
        <taxon>Pseudomonadati</taxon>
        <taxon>Pseudomonadota</taxon>
        <taxon>Gammaproteobacteria</taxon>
        <taxon>Enterobacterales</taxon>
        <taxon>Erwiniaceae</taxon>
        <taxon>Buchnera</taxon>
    </lineage>
</organism>
<gene>
    <name evidence="1" type="primary">infA</name>
    <name type="ordered locus">bbp_292</name>
</gene>
<sequence length="72" mass="8351">MTKEDCIEMQGVVIDTLPNTMFRVQLDNKHIVTAHISGKMRKNYIRILTGDKVTLELTPYDLSKGRIIFRSR</sequence>
<protein>
    <recommendedName>
        <fullName evidence="1">Translation initiation factor IF-1</fullName>
    </recommendedName>
</protein>
<comment type="function">
    <text evidence="1">One of the essential components for the initiation of protein synthesis. Stabilizes the binding of IF-2 and IF-3 on the 30S subunit to which N-formylmethionyl-tRNA(fMet) subsequently binds. Helps modulate mRNA selection, yielding the 30S pre-initiation complex (PIC). Upon addition of the 50S ribosomal subunit IF-1, IF-2 and IF-3 are released leaving the mature 70S translation initiation complex.</text>
</comment>
<comment type="subunit">
    <text evidence="1">Component of the 30S ribosomal translation pre-initiation complex which assembles on the 30S ribosome in the order IF-2 and IF-3, IF-1 and N-formylmethionyl-tRNA(fMet); mRNA recruitment can occur at any time during PIC assembly.</text>
</comment>
<comment type="subcellular location">
    <subcellularLocation>
        <location evidence="1">Cytoplasm</location>
    </subcellularLocation>
</comment>
<comment type="similarity">
    <text evidence="1">Belongs to the IF-1 family.</text>
</comment>